<dbReference type="EMBL" id="CP000141">
    <property type="protein sequence ID" value="ABB14431.1"/>
    <property type="molecule type" value="Genomic_DNA"/>
</dbReference>
<dbReference type="RefSeq" id="WP_011344300.1">
    <property type="nucleotide sequence ID" value="NC_007503.1"/>
</dbReference>
<dbReference type="SMR" id="Q3ACA9"/>
<dbReference type="FunCoup" id="Q3ACA9">
    <property type="interactions" value="93"/>
</dbReference>
<dbReference type="STRING" id="246194.CHY_1393"/>
<dbReference type="KEGG" id="chy:CHY_1393"/>
<dbReference type="eggNOG" id="COG1923">
    <property type="taxonomic scope" value="Bacteria"/>
</dbReference>
<dbReference type="HOGENOM" id="CLU_113688_0_2_9"/>
<dbReference type="InParanoid" id="Q3ACA9"/>
<dbReference type="OrthoDB" id="9799751at2"/>
<dbReference type="Proteomes" id="UP000002706">
    <property type="component" value="Chromosome"/>
</dbReference>
<dbReference type="GO" id="GO:0005829">
    <property type="term" value="C:cytosol"/>
    <property type="evidence" value="ECO:0007669"/>
    <property type="project" value="TreeGrafter"/>
</dbReference>
<dbReference type="GO" id="GO:0003723">
    <property type="term" value="F:RNA binding"/>
    <property type="evidence" value="ECO:0007669"/>
    <property type="project" value="UniProtKB-UniRule"/>
</dbReference>
<dbReference type="GO" id="GO:0006355">
    <property type="term" value="P:regulation of DNA-templated transcription"/>
    <property type="evidence" value="ECO:0007669"/>
    <property type="project" value="InterPro"/>
</dbReference>
<dbReference type="GO" id="GO:0043487">
    <property type="term" value="P:regulation of RNA stability"/>
    <property type="evidence" value="ECO:0007669"/>
    <property type="project" value="TreeGrafter"/>
</dbReference>
<dbReference type="GO" id="GO:0045974">
    <property type="term" value="P:regulation of translation, ncRNA-mediated"/>
    <property type="evidence" value="ECO:0007669"/>
    <property type="project" value="TreeGrafter"/>
</dbReference>
<dbReference type="CDD" id="cd01716">
    <property type="entry name" value="Hfq"/>
    <property type="match status" value="1"/>
</dbReference>
<dbReference type="FunFam" id="2.30.30.100:FF:000012">
    <property type="entry name" value="RNA-binding protein Hfq"/>
    <property type="match status" value="1"/>
</dbReference>
<dbReference type="Gene3D" id="2.30.30.100">
    <property type="match status" value="1"/>
</dbReference>
<dbReference type="HAMAP" id="MF_00436">
    <property type="entry name" value="Hfq"/>
    <property type="match status" value="1"/>
</dbReference>
<dbReference type="InterPro" id="IPR005001">
    <property type="entry name" value="Hfq"/>
</dbReference>
<dbReference type="InterPro" id="IPR010920">
    <property type="entry name" value="LSM_dom_sf"/>
</dbReference>
<dbReference type="InterPro" id="IPR047575">
    <property type="entry name" value="Sm"/>
</dbReference>
<dbReference type="NCBIfam" id="TIGR02383">
    <property type="entry name" value="Hfq"/>
    <property type="match status" value="1"/>
</dbReference>
<dbReference type="NCBIfam" id="NF001602">
    <property type="entry name" value="PRK00395.1"/>
    <property type="match status" value="1"/>
</dbReference>
<dbReference type="PANTHER" id="PTHR34772">
    <property type="entry name" value="RNA-BINDING PROTEIN HFQ"/>
    <property type="match status" value="1"/>
</dbReference>
<dbReference type="PANTHER" id="PTHR34772:SF1">
    <property type="entry name" value="RNA-BINDING PROTEIN HFQ"/>
    <property type="match status" value="1"/>
</dbReference>
<dbReference type="Pfam" id="PF17209">
    <property type="entry name" value="Hfq"/>
    <property type="match status" value="1"/>
</dbReference>
<dbReference type="SUPFAM" id="SSF50182">
    <property type="entry name" value="Sm-like ribonucleoproteins"/>
    <property type="match status" value="1"/>
</dbReference>
<dbReference type="PROSITE" id="PS52002">
    <property type="entry name" value="SM"/>
    <property type="match status" value="1"/>
</dbReference>
<sequence length="85" mass="9582">MSKNQLNLQDAFLNQVRKENVGVTIFLINGFQLKGFVKGFDNFTVILESEGKQHMIYKHAISTIIPQRPVNTYLAKGGNEENTPS</sequence>
<gene>
    <name evidence="1" type="primary">hfq</name>
    <name type="ordered locus">CHY_1393</name>
</gene>
<reference key="1">
    <citation type="journal article" date="2005" name="PLoS Genet.">
        <title>Life in hot carbon monoxide: the complete genome sequence of Carboxydothermus hydrogenoformans Z-2901.</title>
        <authorList>
            <person name="Wu M."/>
            <person name="Ren Q."/>
            <person name="Durkin A.S."/>
            <person name="Daugherty S.C."/>
            <person name="Brinkac L.M."/>
            <person name="Dodson R.J."/>
            <person name="Madupu R."/>
            <person name="Sullivan S.A."/>
            <person name="Kolonay J.F."/>
            <person name="Nelson W.C."/>
            <person name="Tallon L.J."/>
            <person name="Jones K.M."/>
            <person name="Ulrich L.E."/>
            <person name="Gonzalez J.M."/>
            <person name="Zhulin I.B."/>
            <person name="Robb F.T."/>
            <person name="Eisen J.A."/>
        </authorList>
    </citation>
    <scope>NUCLEOTIDE SEQUENCE [LARGE SCALE GENOMIC DNA]</scope>
    <source>
        <strain>ATCC BAA-161 / DSM 6008 / Z-2901</strain>
    </source>
</reference>
<accession>Q3ACA9</accession>
<keyword id="KW-1185">Reference proteome</keyword>
<keyword id="KW-0694">RNA-binding</keyword>
<keyword id="KW-0346">Stress response</keyword>
<organism>
    <name type="scientific">Carboxydothermus hydrogenoformans (strain ATCC BAA-161 / DSM 6008 / Z-2901)</name>
    <dbReference type="NCBI Taxonomy" id="246194"/>
    <lineage>
        <taxon>Bacteria</taxon>
        <taxon>Bacillati</taxon>
        <taxon>Bacillota</taxon>
        <taxon>Clostridia</taxon>
        <taxon>Thermoanaerobacterales</taxon>
        <taxon>Thermoanaerobacteraceae</taxon>
        <taxon>Carboxydothermus</taxon>
    </lineage>
</organism>
<feature type="chain" id="PRO_0000265146" description="RNA-binding protein Hfq">
    <location>
        <begin position="1"/>
        <end position="85"/>
    </location>
</feature>
<feature type="domain" description="Sm" evidence="2">
    <location>
        <begin position="10"/>
        <end position="70"/>
    </location>
</feature>
<protein>
    <recommendedName>
        <fullName evidence="1">RNA-binding protein Hfq</fullName>
    </recommendedName>
</protein>
<name>HFQ_CARHZ</name>
<evidence type="ECO:0000255" key="1">
    <source>
        <dbReference type="HAMAP-Rule" id="MF_00436"/>
    </source>
</evidence>
<evidence type="ECO:0000255" key="2">
    <source>
        <dbReference type="PROSITE-ProRule" id="PRU01346"/>
    </source>
</evidence>
<proteinExistence type="inferred from homology"/>
<comment type="function">
    <text evidence="1">RNA chaperone that binds small regulatory RNA (sRNAs) and mRNAs to facilitate mRNA translational regulation in response to envelope stress, environmental stress and changes in metabolite concentrations. Also binds with high specificity to tRNAs.</text>
</comment>
<comment type="subunit">
    <text evidence="1">Homohexamer.</text>
</comment>
<comment type="similarity">
    <text evidence="1">Belongs to the Hfq family.</text>
</comment>